<proteinExistence type="inferred from homology"/>
<name>PFKA_YERPP</name>
<keyword id="KW-0021">Allosteric enzyme</keyword>
<keyword id="KW-0067">ATP-binding</keyword>
<keyword id="KW-0963">Cytoplasm</keyword>
<keyword id="KW-0324">Glycolysis</keyword>
<keyword id="KW-0418">Kinase</keyword>
<keyword id="KW-0460">Magnesium</keyword>
<keyword id="KW-0479">Metal-binding</keyword>
<keyword id="KW-0547">Nucleotide-binding</keyword>
<keyword id="KW-0808">Transferase</keyword>
<accession>A4TSA7</accession>
<gene>
    <name evidence="1" type="primary">pfkA</name>
    <name type="ordered locus">YPDSF_3826</name>
</gene>
<dbReference type="EC" id="2.7.1.11" evidence="1"/>
<dbReference type="EMBL" id="CP000668">
    <property type="protein sequence ID" value="ABP42169.1"/>
    <property type="molecule type" value="Genomic_DNA"/>
</dbReference>
<dbReference type="RefSeq" id="WP_002208966.1">
    <property type="nucleotide sequence ID" value="NZ_CP009715.1"/>
</dbReference>
<dbReference type="SMR" id="A4TSA7"/>
<dbReference type="GeneID" id="57974514"/>
<dbReference type="KEGG" id="ypp:YPDSF_3826"/>
<dbReference type="PATRIC" id="fig|386656.14.peg.693"/>
<dbReference type="UniPathway" id="UPA00109">
    <property type="reaction ID" value="UER00182"/>
</dbReference>
<dbReference type="GO" id="GO:0005945">
    <property type="term" value="C:6-phosphofructokinase complex"/>
    <property type="evidence" value="ECO:0007669"/>
    <property type="project" value="TreeGrafter"/>
</dbReference>
<dbReference type="GO" id="GO:0003872">
    <property type="term" value="F:6-phosphofructokinase activity"/>
    <property type="evidence" value="ECO:0007669"/>
    <property type="project" value="UniProtKB-UniRule"/>
</dbReference>
<dbReference type="GO" id="GO:0016208">
    <property type="term" value="F:AMP binding"/>
    <property type="evidence" value="ECO:0007669"/>
    <property type="project" value="TreeGrafter"/>
</dbReference>
<dbReference type="GO" id="GO:0005524">
    <property type="term" value="F:ATP binding"/>
    <property type="evidence" value="ECO:0007669"/>
    <property type="project" value="UniProtKB-KW"/>
</dbReference>
<dbReference type="GO" id="GO:0070095">
    <property type="term" value="F:fructose-6-phosphate binding"/>
    <property type="evidence" value="ECO:0007669"/>
    <property type="project" value="TreeGrafter"/>
</dbReference>
<dbReference type="GO" id="GO:0042802">
    <property type="term" value="F:identical protein binding"/>
    <property type="evidence" value="ECO:0007669"/>
    <property type="project" value="TreeGrafter"/>
</dbReference>
<dbReference type="GO" id="GO:0046872">
    <property type="term" value="F:metal ion binding"/>
    <property type="evidence" value="ECO:0007669"/>
    <property type="project" value="UniProtKB-KW"/>
</dbReference>
<dbReference type="GO" id="GO:0048029">
    <property type="term" value="F:monosaccharide binding"/>
    <property type="evidence" value="ECO:0007669"/>
    <property type="project" value="TreeGrafter"/>
</dbReference>
<dbReference type="GO" id="GO:0061621">
    <property type="term" value="P:canonical glycolysis"/>
    <property type="evidence" value="ECO:0007669"/>
    <property type="project" value="TreeGrafter"/>
</dbReference>
<dbReference type="GO" id="GO:0030388">
    <property type="term" value="P:fructose 1,6-bisphosphate metabolic process"/>
    <property type="evidence" value="ECO:0007669"/>
    <property type="project" value="TreeGrafter"/>
</dbReference>
<dbReference type="GO" id="GO:0006002">
    <property type="term" value="P:fructose 6-phosphate metabolic process"/>
    <property type="evidence" value="ECO:0007669"/>
    <property type="project" value="InterPro"/>
</dbReference>
<dbReference type="FunFam" id="3.40.50.450:FF:000001">
    <property type="entry name" value="ATP-dependent 6-phosphofructokinase"/>
    <property type="match status" value="1"/>
</dbReference>
<dbReference type="FunFam" id="3.40.50.460:FF:000002">
    <property type="entry name" value="ATP-dependent 6-phosphofructokinase"/>
    <property type="match status" value="1"/>
</dbReference>
<dbReference type="Gene3D" id="3.40.50.450">
    <property type="match status" value="1"/>
</dbReference>
<dbReference type="Gene3D" id="3.40.50.460">
    <property type="entry name" value="Phosphofructokinase domain"/>
    <property type="match status" value="1"/>
</dbReference>
<dbReference type="HAMAP" id="MF_00339">
    <property type="entry name" value="Phosphofructokinase_I_B1"/>
    <property type="match status" value="1"/>
</dbReference>
<dbReference type="InterPro" id="IPR022953">
    <property type="entry name" value="ATP_PFK"/>
</dbReference>
<dbReference type="InterPro" id="IPR012003">
    <property type="entry name" value="ATP_PFK_prok-type"/>
</dbReference>
<dbReference type="InterPro" id="IPR012828">
    <property type="entry name" value="PFKA_ATP_prok"/>
</dbReference>
<dbReference type="InterPro" id="IPR015912">
    <property type="entry name" value="Phosphofructokinase_CS"/>
</dbReference>
<dbReference type="InterPro" id="IPR000023">
    <property type="entry name" value="Phosphofructokinase_dom"/>
</dbReference>
<dbReference type="InterPro" id="IPR035966">
    <property type="entry name" value="PKF_sf"/>
</dbReference>
<dbReference type="NCBIfam" id="TIGR02482">
    <property type="entry name" value="PFKA_ATP"/>
    <property type="match status" value="1"/>
</dbReference>
<dbReference type="NCBIfam" id="NF002872">
    <property type="entry name" value="PRK03202.1"/>
    <property type="match status" value="1"/>
</dbReference>
<dbReference type="PANTHER" id="PTHR13697:SF4">
    <property type="entry name" value="ATP-DEPENDENT 6-PHOSPHOFRUCTOKINASE"/>
    <property type="match status" value="1"/>
</dbReference>
<dbReference type="PANTHER" id="PTHR13697">
    <property type="entry name" value="PHOSPHOFRUCTOKINASE"/>
    <property type="match status" value="1"/>
</dbReference>
<dbReference type="Pfam" id="PF00365">
    <property type="entry name" value="PFK"/>
    <property type="match status" value="1"/>
</dbReference>
<dbReference type="PIRSF" id="PIRSF000532">
    <property type="entry name" value="ATP_PFK_prok"/>
    <property type="match status" value="1"/>
</dbReference>
<dbReference type="PRINTS" id="PR00476">
    <property type="entry name" value="PHFRCTKINASE"/>
</dbReference>
<dbReference type="SUPFAM" id="SSF53784">
    <property type="entry name" value="Phosphofructokinase"/>
    <property type="match status" value="1"/>
</dbReference>
<dbReference type="PROSITE" id="PS00433">
    <property type="entry name" value="PHOSPHOFRUCTOKINASE"/>
    <property type="match status" value="1"/>
</dbReference>
<organism>
    <name type="scientific">Yersinia pestis (strain Pestoides F)</name>
    <dbReference type="NCBI Taxonomy" id="386656"/>
    <lineage>
        <taxon>Bacteria</taxon>
        <taxon>Pseudomonadati</taxon>
        <taxon>Pseudomonadota</taxon>
        <taxon>Gammaproteobacteria</taxon>
        <taxon>Enterobacterales</taxon>
        <taxon>Yersiniaceae</taxon>
        <taxon>Yersinia</taxon>
    </lineage>
</organism>
<reference key="1">
    <citation type="submission" date="2007-02" db="EMBL/GenBank/DDBJ databases">
        <title>Complete sequence of chromosome of Yersinia pestis Pestoides F.</title>
        <authorList>
            <consortium name="US DOE Joint Genome Institute"/>
            <person name="Copeland A."/>
            <person name="Lucas S."/>
            <person name="Lapidus A."/>
            <person name="Barry K."/>
            <person name="Detter J.C."/>
            <person name="Glavina del Rio T."/>
            <person name="Hammon N."/>
            <person name="Israni S."/>
            <person name="Dalin E."/>
            <person name="Tice H."/>
            <person name="Pitluck S."/>
            <person name="Di Bartolo G."/>
            <person name="Chain P."/>
            <person name="Malfatti S."/>
            <person name="Shin M."/>
            <person name="Vergez L."/>
            <person name="Schmutz J."/>
            <person name="Larimer F."/>
            <person name="Land M."/>
            <person name="Hauser L."/>
            <person name="Worsham P."/>
            <person name="Chu M."/>
            <person name="Bearden S."/>
            <person name="Garcia E."/>
            <person name="Richardson P."/>
        </authorList>
    </citation>
    <scope>NUCLEOTIDE SEQUENCE [LARGE SCALE GENOMIC DNA]</scope>
    <source>
        <strain>Pestoides F</strain>
    </source>
</reference>
<sequence>MVKKIGVLTSGGDAPGMNAAIRGVVRAALSAGLDVFGIEDGYLGLYENRMKKLDRYSVSDMINRGGTFLGSARFPEFRDPEVRKVALKNMHERGIDGLVVIGGDGSYAGADLLTKEGGIHCVGLPGTIDNDVAGTDYTIGFFTALETVVEAIDRLRDTSSSHQRISIVEVMGRYCGDLTLAAAIAGGCEFIAIPEVEFKRDDLVAEIKAGIAKGKKHAIVAITEKLDDIDSLAKYIEKETGRETRGTVLGHIQRGGAPVAYDRILASRMGAYAVDLLLQDHDYKKGGFCVGVQNEKMVHELISVCIAPENKKSKFKEDWYDTAKKLF</sequence>
<comment type="function">
    <text evidence="1">Catalyzes the phosphorylation of D-fructose 6-phosphate to fructose 1,6-bisphosphate by ATP, the first committing step of glycolysis.</text>
</comment>
<comment type="catalytic activity">
    <reaction evidence="1">
        <text>beta-D-fructose 6-phosphate + ATP = beta-D-fructose 1,6-bisphosphate + ADP + H(+)</text>
        <dbReference type="Rhea" id="RHEA:16109"/>
        <dbReference type="ChEBI" id="CHEBI:15378"/>
        <dbReference type="ChEBI" id="CHEBI:30616"/>
        <dbReference type="ChEBI" id="CHEBI:32966"/>
        <dbReference type="ChEBI" id="CHEBI:57634"/>
        <dbReference type="ChEBI" id="CHEBI:456216"/>
        <dbReference type="EC" id="2.7.1.11"/>
    </reaction>
</comment>
<comment type="cofactor">
    <cofactor evidence="1">
        <name>Mg(2+)</name>
        <dbReference type="ChEBI" id="CHEBI:18420"/>
    </cofactor>
</comment>
<comment type="activity regulation">
    <text evidence="1">Allosterically activated by ADP and other diphosphonucleosides, and allosterically inhibited by phosphoenolpyruvate.</text>
</comment>
<comment type="pathway">
    <text evidence="1">Carbohydrate degradation; glycolysis; D-glyceraldehyde 3-phosphate and glycerone phosphate from D-glucose: step 3/4.</text>
</comment>
<comment type="subunit">
    <text evidence="1">Homotetramer.</text>
</comment>
<comment type="subcellular location">
    <subcellularLocation>
        <location evidence="1">Cytoplasm</location>
    </subcellularLocation>
</comment>
<comment type="similarity">
    <text evidence="1">Belongs to the phosphofructokinase type A (PFKA) family. ATP-dependent PFK group I subfamily. Prokaryotic clade 'B1' sub-subfamily.</text>
</comment>
<protein>
    <recommendedName>
        <fullName evidence="1">ATP-dependent 6-phosphofructokinase</fullName>
        <shortName evidence="1">ATP-PFK</shortName>
        <shortName evidence="1">Phosphofructokinase</shortName>
        <ecNumber evidence="1">2.7.1.11</ecNumber>
    </recommendedName>
    <alternativeName>
        <fullName evidence="1">Phosphohexokinase</fullName>
    </alternativeName>
</protein>
<feature type="chain" id="PRO_1000059814" description="ATP-dependent 6-phosphofructokinase">
    <location>
        <begin position="1"/>
        <end position="327"/>
    </location>
</feature>
<feature type="active site" description="Proton acceptor" evidence="1">
    <location>
        <position position="129"/>
    </location>
</feature>
<feature type="binding site" evidence="1">
    <location>
        <position position="12"/>
    </location>
    <ligand>
        <name>ATP</name>
        <dbReference type="ChEBI" id="CHEBI:30616"/>
    </ligand>
</feature>
<feature type="binding site" evidence="1">
    <location>
        <begin position="22"/>
        <end position="26"/>
    </location>
    <ligand>
        <name>ADP</name>
        <dbReference type="ChEBI" id="CHEBI:456216"/>
        <note>allosteric activator; ligand shared between dimeric partners</note>
    </ligand>
</feature>
<feature type="binding site" evidence="1">
    <location>
        <begin position="55"/>
        <end position="60"/>
    </location>
    <ligand>
        <name>ADP</name>
        <dbReference type="ChEBI" id="CHEBI:456216"/>
        <note>allosteric activator; ligand shared between dimeric partners</note>
    </ligand>
</feature>
<feature type="binding site" evidence="1">
    <location>
        <begin position="73"/>
        <end position="74"/>
    </location>
    <ligand>
        <name>ATP</name>
        <dbReference type="ChEBI" id="CHEBI:30616"/>
    </ligand>
</feature>
<feature type="binding site" evidence="1">
    <location>
        <begin position="103"/>
        <end position="106"/>
    </location>
    <ligand>
        <name>ATP</name>
        <dbReference type="ChEBI" id="CHEBI:30616"/>
    </ligand>
</feature>
<feature type="binding site" evidence="1">
    <location>
        <position position="104"/>
    </location>
    <ligand>
        <name>Mg(2+)</name>
        <dbReference type="ChEBI" id="CHEBI:18420"/>
        <note>catalytic</note>
    </ligand>
</feature>
<feature type="binding site" description="in other chain" evidence="1">
    <location>
        <begin position="127"/>
        <end position="129"/>
    </location>
    <ligand>
        <name>substrate</name>
        <note>ligand shared between dimeric partners</note>
    </ligand>
</feature>
<feature type="binding site" description="in other chain" evidence="1">
    <location>
        <position position="156"/>
    </location>
    <ligand>
        <name>ADP</name>
        <dbReference type="ChEBI" id="CHEBI:456216"/>
        <note>allosteric activator; ligand shared between dimeric partners</note>
    </ligand>
</feature>
<feature type="binding site" evidence="1">
    <location>
        <position position="164"/>
    </location>
    <ligand>
        <name>substrate</name>
        <note>ligand shared between dimeric partners</note>
    </ligand>
</feature>
<feature type="binding site" description="in other chain" evidence="1">
    <location>
        <begin position="171"/>
        <end position="173"/>
    </location>
    <ligand>
        <name>substrate</name>
        <note>ligand shared between dimeric partners</note>
    </ligand>
</feature>
<feature type="binding site" description="in other chain" evidence="1">
    <location>
        <begin position="187"/>
        <end position="189"/>
    </location>
    <ligand>
        <name>ADP</name>
        <dbReference type="ChEBI" id="CHEBI:456216"/>
        <note>allosteric activator; ligand shared between dimeric partners</note>
    </ligand>
</feature>
<feature type="binding site" description="in other chain" evidence="1">
    <location>
        <position position="213"/>
    </location>
    <ligand>
        <name>ADP</name>
        <dbReference type="ChEBI" id="CHEBI:456216"/>
        <note>allosteric activator; ligand shared between dimeric partners</note>
    </ligand>
</feature>
<feature type="binding site" description="in other chain" evidence="1">
    <location>
        <begin position="215"/>
        <end position="217"/>
    </location>
    <ligand>
        <name>ADP</name>
        <dbReference type="ChEBI" id="CHEBI:456216"/>
        <note>allosteric activator; ligand shared between dimeric partners</note>
    </ligand>
</feature>
<feature type="binding site" description="in other chain" evidence="1">
    <location>
        <position position="224"/>
    </location>
    <ligand>
        <name>substrate</name>
        <note>ligand shared between dimeric partners</note>
    </ligand>
</feature>
<feature type="binding site" evidence="1">
    <location>
        <position position="245"/>
    </location>
    <ligand>
        <name>substrate</name>
        <note>ligand shared between dimeric partners</note>
    </ligand>
</feature>
<feature type="binding site" description="in other chain" evidence="1">
    <location>
        <begin position="251"/>
        <end position="254"/>
    </location>
    <ligand>
        <name>substrate</name>
        <note>ligand shared between dimeric partners</note>
    </ligand>
</feature>
<evidence type="ECO:0000255" key="1">
    <source>
        <dbReference type="HAMAP-Rule" id="MF_00339"/>
    </source>
</evidence>